<accession>Q6TLK5</accession>
<feature type="chain" id="PRO_0000435742" description="Secondary metabolism regulator laeA">
    <location>
        <begin position="1"/>
        <end position="374"/>
    </location>
</feature>
<feature type="region of interest" description="Disordered" evidence="2">
    <location>
        <begin position="1"/>
        <end position="75"/>
    </location>
</feature>
<feature type="compositionally biased region" description="Polar residues" evidence="2">
    <location>
        <begin position="23"/>
        <end position="40"/>
    </location>
</feature>
<feature type="modified residue" description="S-methylmethionine" evidence="1">
    <location>
        <position position="207"/>
    </location>
</feature>
<comment type="function">
    <text evidence="1 3">Methyltransferase that performs automethylation at Met-207 (By similarity). No other methyl-accepting substrate has been identified yet (By similarity). Component of the velvet transcription factor complex that acts as a global regulator for secondary metabolite gene expression (PubMed:15075281). Controls the expression of the sterigmatocystin, penicillin, and lovastatin gene clusters (PubMed:15075281). Controls light-dependent formation of the velB-vosA complex, veA protein modification, and is required for light-mediated inhibition of sexual development (By similarity). Within the velvet complex, controls light-dependent secondary metabolism (By similarity). Involved in the defense response against Drosophila melanogaster larval grazing (By similarity).</text>
</comment>
<comment type="catalytic activity">
    <reaction evidence="1">
        <text>L-methionyl-[protein] + S-adenosyl-L-methionine = S-methyl-L-methionyl-[protein] + S-adenosyl-L-homocysteine</text>
        <dbReference type="Rhea" id="RHEA:60560"/>
        <dbReference type="Rhea" id="RHEA-COMP:12313"/>
        <dbReference type="Rhea" id="RHEA-COMP:15592"/>
        <dbReference type="ChEBI" id="CHEBI:16044"/>
        <dbReference type="ChEBI" id="CHEBI:57856"/>
        <dbReference type="ChEBI" id="CHEBI:59789"/>
        <dbReference type="ChEBI" id="CHEBI:142742"/>
    </reaction>
    <physiologicalReaction direction="left-to-right" evidence="1">
        <dbReference type="Rhea" id="RHEA:60561"/>
    </physiologicalReaction>
</comment>
<comment type="subunit">
    <text evidence="1">Component of the heterotrimeric velvet complex composed of laeA, veA and velB; VeA acting as a bridging protein between laeA and velB (By similarity).</text>
</comment>
<comment type="subcellular location">
    <subcellularLocation>
        <location evidence="1">Nucleus</location>
    </subcellularLocation>
</comment>
<comment type="induction">
    <text evidence="3">Expression is negatively regulated by the transcription factor AflR, as well as by two signal transduction elements, protein kinase A and RasA.</text>
</comment>
<comment type="PTM">
    <text evidence="1">Self-methylates at Met-207.</text>
</comment>
<comment type="disruption phenotype">
    <text evidence="3">Reduces secondary metabolite production, including sterigmatocystin, a carcinogen biochemically related to the agricultural contaminant aflatoxin (PubMed:15075281).</text>
</comment>
<comment type="similarity">
    <text evidence="5">Belongs to the methyltransferase superfamily. LaeA methyltransferase family.</text>
</comment>
<sequence>MFEMGPVGTRLPAMTSPAHNHYSYHSPTSSDRGRSRQNSDAMDIQSITEREPATRYAVAGGPAPWNRNGSPSMSPMYSNNSERNQFHEENGRTYHGFRRGMYFLPCDEQEQDRLDIFHKLFTVARVSESLIYAPHPTNGRFLDLGCGTGIWAIEVANKYPDAFVAGVDLAPIQPPNHPKNCEFYAPFDFEAPWAMGEDSWDLIHLQMGCGSVMGWPNLYRRIFAHLRPGAWFEQVEIDFEPRCDDRSLDGTALRHWYDCLKQATAETMRPIAHSSRDTIKDLQDAGFTEIDHQIVGLPLNPWHQDEHERKVARWYNLAVSESIENLSLAPFSRVYRWPLERIQQLAADVKSEAFNKEIHAYNILHIYQARKPLR</sequence>
<protein>
    <recommendedName>
        <fullName evidence="5">Secondary metabolism regulator laeA</fullName>
    </recommendedName>
    <alternativeName>
        <fullName evidence="5">Methyltransferase laeA</fullName>
        <ecNumber evidence="1">2.1.1.-</ecNumber>
    </alternativeName>
    <alternativeName>
        <fullName evidence="5">Velvet complex subunit laeA</fullName>
    </alternativeName>
</protein>
<name>LAEA_EMEND</name>
<proteinExistence type="evidence at transcript level"/>
<dbReference type="EC" id="2.1.1.-" evidence="1"/>
<dbReference type="EMBL" id="AY394722">
    <property type="protein sequence ID" value="AAQ95166.1"/>
    <property type="molecule type" value="Genomic_DNA"/>
</dbReference>
<dbReference type="SMR" id="Q6TLK5"/>
<dbReference type="OMA" id="CDFYAPF"/>
<dbReference type="GO" id="GO:0005634">
    <property type="term" value="C:nucleus"/>
    <property type="evidence" value="ECO:0007669"/>
    <property type="project" value="UniProtKB-SubCell"/>
</dbReference>
<dbReference type="GO" id="GO:0008168">
    <property type="term" value="F:methyltransferase activity"/>
    <property type="evidence" value="ECO:0007669"/>
    <property type="project" value="UniProtKB-KW"/>
</dbReference>
<dbReference type="GO" id="GO:0032259">
    <property type="term" value="P:methylation"/>
    <property type="evidence" value="ECO:0007669"/>
    <property type="project" value="UniProtKB-KW"/>
</dbReference>
<dbReference type="GO" id="GO:0030435">
    <property type="term" value="P:sporulation resulting in formation of a cellular spore"/>
    <property type="evidence" value="ECO:0007669"/>
    <property type="project" value="UniProtKB-KW"/>
</dbReference>
<dbReference type="CDD" id="cd02440">
    <property type="entry name" value="AdoMet_MTases"/>
    <property type="match status" value="1"/>
</dbReference>
<dbReference type="Gene3D" id="3.40.50.150">
    <property type="entry name" value="Vaccinia Virus protein VP39"/>
    <property type="match status" value="1"/>
</dbReference>
<dbReference type="InterPro" id="IPR029063">
    <property type="entry name" value="SAM-dependent_MTases_sf"/>
</dbReference>
<dbReference type="PANTHER" id="PTHR43591">
    <property type="entry name" value="METHYLTRANSFERASE"/>
    <property type="match status" value="1"/>
</dbReference>
<dbReference type="PANTHER" id="PTHR43591:SF30">
    <property type="entry name" value="PROTEIN-METHIONINE METHYLTRANSFERASE LAEA"/>
    <property type="match status" value="1"/>
</dbReference>
<dbReference type="Pfam" id="PF13489">
    <property type="entry name" value="Methyltransf_23"/>
    <property type="match status" value="1"/>
</dbReference>
<dbReference type="SUPFAM" id="SSF53335">
    <property type="entry name" value="S-adenosyl-L-methionine-dependent methyltransferases"/>
    <property type="match status" value="1"/>
</dbReference>
<evidence type="ECO:0000250" key="1">
    <source>
        <dbReference type="UniProtKB" id="C8VQG9"/>
    </source>
</evidence>
<evidence type="ECO:0000256" key="2">
    <source>
        <dbReference type="SAM" id="MobiDB-lite"/>
    </source>
</evidence>
<evidence type="ECO:0000269" key="3">
    <source>
    </source>
</evidence>
<evidence type="ECO:0000303" key="4">
    <source>
    </source>
</evidence>
<evidence type="ECO:0000305" key="5"/>
<evidence type="ECO:0000312" key="6">
    <source>
        <dbReference type="EMBL" id="AAQ95166.1"/>
    </source>
</evidence>
<keyword id="KW-0488">Methylation</keyword>
<keyword id="KW-0489">Methyltransferase</keyword>
<keyword id="KW-0539">Nucleus</keyword>
<keyword id="KW-0949">S-adenosyl-L-methionine</keyword>
<keyword id="KW-0749">Sporulation</keyword>
<keyword id="KW-0804">Transcription</keyword>
<keyword id="KW-0805">Transcription regulation</keyword>
<keyword id="KW-0808">Transferase</keyword>
<gene>
    <name evidence="4" type="primary">laeA</name>
</gene>
<organism evidence="6">
    <name type="scientific">Emericella nidulans</name>
    <name type="common">Aspergillus nidulans</name>
    <dbReference type="NCBI Taxonomy" id="162425"/>
    <lineage>
        <taxon>Eukaryota</taxon>
        <taxon>Fungi</taxon>
        <taxon>Dikarya</taxon>
        <taxon>Ascomycota</taxon>
        <taxon>Pezizomycotina</taxon>
        <taxon>Eurotiomycetes</taxon>
        <taxon>Eurotiomycetidae</taxon>
        <taxon>Eurotiales</taxon>
        <taxon>Aspergillaceae</taxon>
        <taxon>Aspergillus</taxon>
        <taxon>Aspergillus subgen. Nidulantes</taxon>
    </lineage>
</organism>
<reference key="1">
    <citation type="journal article" date="2004" name="Eukaryot. Cell">
        <title>LaeA, a regulator of secondary metabolism in Aspergillus spp.</title>
        <authorList>
            <person name="Bok J.W."/>
            <person name="Keller N.P."/>
        </authorList>
    </citation>
    <scope>NUCLEOTIDE SEQUENCE [GENOMIC DNA]</scope>
    <scope>FUNCTION</scope>
    <scope>DISRUPTION PHENOTYPE</scope>
    <scope>INDUCTION</scope>
    <source>
        <strain>TJH3.40</strain>
    </source>
</reference>